<comment type="function">
    <text>WTI-1B inhibits trypsin stoichiometrically.</text>
</comment>
<comment type="similarity">
    <text evidence="2">Belongs to the protease inhibitor I3 (leguminous Kunitz-type inhibitor) family.</text>
</comment>
<feature type="chain" id="PRO_0000083303" description="Trypsin inhibitor 1B">
    <location>
        <begin position="1"/>
        <end position="172"/>
    </location>
</feature>
<feature type="site" description="Reactive bond for trypsin">
    <location>
        <begin position="64"/>
        <end position="65"/>
    </location>
</feature>
<feature type="disulfide bond" evidence="1">
    <location>
        <begin position="40"/>
        <end position="84"/>
    </location>
</feature>
<feature type="disulfide bond" evidence="1">
    <location>
        <begin position="133"/>
        <end position="139"/>
    </location>
</feature>
<evidence type="ECO:0000250" key="1"/>
<evidence type="ECO:0000305" key="2"/>
<protein>
    <recommendedName>
        <fullName>Trypsin inhibitor 1B</fullName>
    </recommendedName>
    <alternativeName>
        <fullName>WTI-1B</fullName>
    </alternativeName>
</protein>
<name>IT1B_PSOTE</name>
<keyword id="KW-0903">Direct protein sequencing</keyword>
<keyword id="KW-1015">Disulfide bond</keyword>
<keyword id="KW-0646">Protease inhibitor</keyword>
<keyword id="KW-0722">Serine protease inhibitor</keyword>
<organism>
    <name type="scientific">Psophocarpus tetragonolobus</name>
    <name type="common">Winged bean</name>
    <name type="synonym">Dolichos tetragonolobus</name>
    <dbReference type="NCBI Taxonomy" id="3891"/>
    <lineage>
        <taxon>Eukaryota</taxon>
        <taxon>Viridiplantae</taxon>
        <taxon>Streptophyta</taxon>
        <taxon>Embryophyta</taxon>
        <taxon>Tracheophyta</taxon>
        <taxon>Spermatophyta</taxon>
        <taxon>Magnoliopsida</taxon>
        <taxon>eudicotyledons</taxon>
        <taxon>Gunneridae</taxon>
        <taxon>Pentapetalae</taxon>
        <taxon>rosids</taxon>
        <taxon>fabids</taxon>
        <taxon>Fabales</taxon>
        <taxon>Fabaceae</taxon>
        <taxon>Papilionoideae</taxon>
        <taxon>50 kb inversion clade</taxon>
        <taxon>NPAAA clade</taxon>
        <taxon>indigoferoid/millettioid clade</taxon>
        <taxon>Phaseoleae</taxon>
        <taxon>Psophocarpus</taxon>
    </lineage>
</organism>
<proteinExistence type="evidence at protein level"/>
<sequence>EPLLDSEGELVRNGGTYYLLPDRWALGGGIEAAATGTETCPLTVVRSPNEVSVGEPLRISSQLRSGFIPDYSLVRIGFANPPKCAPSPWWTVVEDQPQQPSVKLSELKSTKFDYLFKFEKVTSKFSSYKLKYCAKRDTCKDIGIYRDQKGYARLVVTDENPLVVIFKKVESS</sequence>
<accession>P32877</accession>
<accession>P01072</accession>
<reference key="1">
    <citation type="journal article" date="1983" name="J. Biochem.">
        <title>Amino acid sequences of two trypsin inhibitors from winged bean seeds (Psophocarpus tetragonolobus (L)DC.).</title>
        <authorList>
            <person name="Yamamoto M."/>
            <person name="Hara S."/>
            <person name="Ikenaka T."/>
        </authorList>
    </citation>
    <scope>PROTEIN SEQUENCE</scope>
    <source>
        <tissue>Seed</tissue>
    </source>
</reference>
<dbReference type="PIR" id="A01311">
    <property type="entry name" value="TIWDKB"/>
</dbReference>
<dbReference type="SMR" id="P32877"/>
<dbReference type="GO" id="GO:0004867">
    <property type="term" value="F:serine-type endopeptidase inhibitor activity"/>
    <property type="evidence" value="ECO:0007669"/>
    <property type="project" value="UniProtKB-KW"/>
</dbReference>
<dbReference type="CDD" id="cd23362">
    <property type="entry name" value="beta-trefoil_STI_WCI3-like"/>
    <property type="match status" value="1"/>
</dbReference>
<dbReference type="Gene3D" id="2.80.10.50">
    <property type="match status" value="1"/>
</dbReference>
<dbReference type="InterPro" id="IPR011065">
    <property type="entry name" value="Kunitz_inhibitor_STI-like_sf"/>
</dbReference>
<dbReference type="InterPro" id="IPR002160">
    <property type="entry name" value="Prot_inh_Kunz-lg"/>
</dbReference>
<dbReference type="PANTHER" id="PTHR33107">
    <property type="entry name" value="KUNITZ TRYPSIN INHIBITOR 2"/>
    <property type="match status" value="1"/>
</dbReference>
<dbReference type="PANTHER" id="PTHR33107:SF81">
    <property type="entry name" value="TRYPSIN INHIBITOR A"/>
    <property type="match status" value="1"/>
</dbReference>
<dbReference type="Pfam" id="PF00197">
    <property type="entry name" value="Kunitz_legume"/>
    <property type="match status" value="1"/>
</dbReference>
<dbReference type="PRINTS" id="PR00291">
    <property type="entry name" value="KUNITZINHBTR"/>
</dbReference>
<dbReference type="SMART" id="SM00452">
    <property type="entry name" value="STI"/>
    <property type="match status" value="1"/>
</dbReference>
<dbReference type="SUPFAM" id="SSF50386">
    <property type="entry name" value="STI-like"/>
    <property type="match status" value="1"/>
</dbReference>
<dbReference type="PROSITE" id="PS00283">
    <property type="entry name" value="SOYBEAN_KUNITZ"/>
    <property type="match status" value="1"/>
</dbReference>